<reference key="1">
    <citation type="journal article" date="2006" name="Genome Res.">
        <title>Alu-mediated 100-kb deletion in the primate genome: the loss of the agouti signaling protein gene in the lesser apes.</title>
        <authorList>
            <person name="Nakayama K."/>
            <person name="Ishida T."/>
        </authorList>
    </citation>
    <scope>NUCLEOTIDE SEQUENCE [GENOMIC DNA]</scope>
</reference>
<proteinExistence type="inferred from homology"/>
<keyword id="KW-1015">Disulfide bond</keyword>
<keyword id="KW-0325">Glycoprotein</keyword>
<keyword id="KW-0960">Knottin</keyword>
<keyword id="KW-0964">Secreted</keyword>
<keyword id="KW-0732">Signal</keyword>
<sequence>MDVTRLLLATLLVFLCFFTAYSHLPPEEKLRDDRSLRSNSSVNLLDFPSVSIVALNKKSKQMSRKEAEKKRSSKKEASMKKVARPRTPLSAPCVATRDSCKPPAPACCDPCASCQCRFFRSACSCRVLSLNC</sequence>
<name>ASIP_CERMI</name>
<comment type="function">
    <text evidence="3">Involved in the regulation of melanogenesis. The binding of ASP to MC1R precludes alpha-MSH initiated signaling and thus blocks production of cAMP, leading to a down-regulation of eumelanogenesis (brown/black pigment) and thus increasing synthesis of pheomelanin (yellow/red pigment) (By similarity).</text>
</comment>
<comment type="subcellular location">
    <subcellularLocation>
        <location evidence="2">Secreted</location>
    </subcellularLocation>
</comment>
<comment type="domain">
    <text evidence="1">The presence of a 'disulfide through disulfide knot' structurally defines this protein as a knottin.</text>
</comment>
<feature type="signal peptide" evidence="4">
    <location>
        <begin position="1"/>
        <end position="22"/>
    </location>
</feature>
<feature type="chain" id="PRO_0000235196" description="Agouti-signaling protein">
    <location>
        <begin position="23"/>
        <end position="132"/>
    </location>
</feature>
<feature type="domain" description="Agouti" evidence="5">
    <location>
        <begin position="93"/>
        <end position="132"/>
    </location>
</feature>
<feature type="region of interest" description="Disordered" evidence="6">
    <location>
        <begin position="58"/>
        <end position="88"/>
    </location>
</feature>
<feature type="compositionally biased region" description="Basic and acidic residues" evidence="6">
    <location>
        <begin position="63"/>
        <end position="79"/>
    </location>
</feature>
<feature type="glycosylation site" description="N-linked (GlcNAc...) asparagine" evidence="4">
    <location>
        <position position="39"/>
    </location>
</feature>
<feature type="disulfide bond" evidence="5">
    <location>
        <begin position="93"/>
        <end position="108"/>
    </location>
</feature>
<feature type="disulfide bond" evidence="5">
    <location>
        <begin position="100"/>
        <end position="114"/>
    </location>
</feature>
<feature type="disulfide bond" evidence="5">
    <location>
        <begin position="107"/>
        <end position="125"/>
    </location>
</feature>
<feature type="disulfide bond" evidence="5">
    <location>
        <begin position="111"/>
        <end position="132"/>
    </location>
</feature>
<feature type="disulfide bond" evidence="5">
    <location>
        <begin position="116"/>
        <end position="123"/>
    </location>
</feature>
<protein>
    <recommendedName>
        <fullName>Agouti-signaling protein</fullName>
        <shortName>ASP</shortName>
    </recommendedName>
    <alternativeName>
        <fullName>Agouti switch protein</fullName>
    </alternativeName>
</protein>
<accession>Q1XGU9</accession>
<dbReference type="EMBL" id="AB236877">
    <property type="protein sequence ID" value="BAE93025.1"/>
    <property type="molecule type" value="Genomic_DNA"/>
</dbReference>
<dbReference type="GlyCosmos" id="Q1XGU9">
    <property type="glycosylation" value="1 site, No reported glycans"/>
</dbReference>
<dbReference type="GO" id="GO:0005615">
    <property type="term" value="C:extracellular space"/>
    <property type="evidence" value="ECO:0000250"/>
    <property type="project" value="UniProtKB"/>
</dbReference>
<dbReference type="GO" id="GO:0031779">
    <property type="term" value="F:melanocortin receptor binding"/>
    <property type="evidence" value="ECO:0007669"/>
    <property type="project" value="TreeGrafter"/>
</dbReference>
<dbReference type="GO" id="GO:0005184">
    <property type="term" value="F:neuropeptide hormone activity"/>
    <property type="evidence" value="ECO:0007669"/>
    <property type="project" value="TreeGrafter"/>
</dbReference>
<dbReference type="GO" id="GO:0009755">
    <property type="term" value="P:hormone-mediated signaling pathway"/>
    <property type="evidence" value="ECO:0007669"/>
    <property type="project" value="InterPro"/>
</dbReference>
<dbReference type="GO" id="GO:0042438">
    <property type="term" value="P:melanin biosynthetic process"/>
    <property type="evidence" value="ECO:0000250"/>
    <property type="project" value="UniProtKB"/>
</dbReference>
<dbReference type="GO" id="GO:0032438">
    <property type="term" value="P:melanosome organization"/>
    <property type="evidence" value="ECO:0007669"/>
    <property type="project" value="TreeGrafter"/>
</dbReference>
<dbReference type="FunFam" id="4.10.760.10:FF:000002">
    <property type="entry name" value="Agouti-signaling protein"/>
    <property type="match status" value="1"/>
</dbReference>
<dbReference type="Gene3D" id="4.10.760.10">
    <property type="entry name" value="Agouti domain"/>
    <property type="match status" value="1"/>
</dbReference>
<dbReference type="InterPro" id="IPR007733">
    <property type="entry name" value="Agouti"/>
</dbReference>
<dbReference type="InterPro" id="IPR027300">
    <property type="entry name" value="Agouti_dom"/>
</dbReference>
<dbReference type="InterPro" id="IPR036836">
    <property type="entry name" value="Agouti_dom_sf"/>
</dbReference>
<dbReference type="PANTHER" id="PTHR16551">
    <property type="entry name" value="AGOUTI RELATED"/>
    <property type="match status" value="1"/>
</dbReference>
<dbReference type="PANTHER" id="PTHR16551:SF1">
    <property type="entry name" value="AGOUTI-SIGNALING PROTEIN"/>
    <property type="match status" value="1"/>
</dbReference>
<dbReference type="Pfam" id="PF05039">
    <property type="entry name" value="Agouti"/>
    <property type="match status" value="1"/>
</dbReference>
<dbReference type="SMART" id="SM00792">
    <property type="entry name" value="Agouti"/>
    <property type="match status" value="1"/>
</dbReference>
<dbReference type="SUPFAM" id="SSF57055">
    <property type="entry name" value="Agouti-related protein"/>
    <property type="match status" value="1"/>
</dbReference>
<dbReference type="PROSITE" id="PS60024">
    <property type="entry name" value="AGOUTI_1"/>
    <property type="match status" value="1"/>
</dbReference>
<dbReference type="PROSITE" id="PS51150">
    <property type="entry name" value="AGOUTI_2"/>
    <property type="match status" value="1"/>
</dbReference>
<organism>
    <name type="scientific">Cercopithecus mitis</name>
    <name type="common">Blue monkey</name>
    <dbReference type="NCBI Taxonomy" id="36225"/>
    <lineage>
        <taxon>Eukaryota</taxon>
        <taxon>Metazoa</taxon>
        <taxon>Chordata</taxon>
        <taxon>Craniata</taxon>
        <taxon>Vertebrata</taxon>
        <taxon>Euteleostomi</taxon>
        <taxon>Mammalia</taxon>
        <taxon>Eutheria</taxon>
        <taxon>Euarchontoglires</taxon>
        <taxon>Primates</taxon>
        <taxon>Haplorrhini</taxon>
        <taxon>Catarrhini</taxon>
        <taxon>Cercopithecidae</taxon>
        <taxon>Cercopithecinae</taxon>
        <taxon>Cercopithecus</taxon>
    </lineage>
</organism>
<gene>
    <name type="primary">ASIP</name>
</gene>
<evidence type="ECO:0000250" key="1"/>
<evidence type="ECO:0000250" key="2">
    <source>
        <dbReference type="UniProtKB" id="P42127"/>
    </source>
</evidence>
<evidence type="ECO:0000250" key="3">
    <source>
        <dbReference type="UniProtKB" id="Q03288"/>
    </source>
</evidence>
<evidence type="ECO:0000255" key="4"/>
<evidence type="ECO:0000255" key="5">
    <source>
        <dbReference type="PROSITE-ProRule" id="PRU00494"/>
    </source>
</evidence>
<evidence type="ECO:0000256" key="6">
    <source>
        <dbReference type="SAM" id="MobiDB-lite"/>
    </source>
</evidence>